<proteinExistence type="inferred from homology"/>
<sequence length="251" mass="29517">MQLTESLGIVLFNRNYREDDKLVKIFTEVAGKQMFFVKHISRSKMSSIIQPLTIADFIFKLNDTGLSYVVDYSNVNTYRYINNDIFRLAYASYVLALADAAIADNESDSHLFTFLKKTLDLMEEGLDYEILTNIFEIQILDRFGISLNFHECAICHRTDLPLDFSHRFSAVLCSEHYYKDNRRNHLDPNVIYLLSRFQKITFDDLRTISLNKDIKKKLRQFIDELYHDYVGIKLKSKTFIDNLVKWGDIMK</sequence>
<feature type="chain" id="PRO_0000411483" description="DNA repair protein RecO">
    <location>
        <begin position="1"/>
        <end position="251"/>
    </location>
</feature>
<accession>P0DD87</accession>
<accession>P65988</accession>
<accession>Q9A1Z6</accession>
<keyword id="KW-0227">DNA damage</keyword>
<keyword id="KW-0233">DNA recombination</keyword>
<keyword id="KW-0234">DNA repair</keyword>
<dbReference type="EMBL" id="BA000034">
    <property type="protein sequence ID" value="BAC63112.1"/>
    <property type="molecule type" value="Genomic_DNA"/>
</dbReference>
<dbReference type="RefSeq" id="WP_002986719.1">
    <property type="nucleotide sequence ID" value="NC_004606.1"/>
</dbReference>
<dbReference type="SMR" id="P0DD87"/>
<dbReference type="GeneID" id="69900002"/>
<dbReference type="KEGG" id="sps:SPs0017"/>
<dbReference type="HOGENOM" id="CLU_066632_4_0_9"/>
<dbReference type="GO" id="GO:0043590">
    <property type="term" value="C:bacterial nucleoid"/>
    <property type="evidence" value="ECO:0007669"/>
    <property type="project" value="TreeGrafter"/>
</dbReference>
<dbReference type="GO" id="GO:0006310">
    <property type="term" value="P:DNA recombination"/>
    <property type="evidence" value="ECO:0007669"/>
    <property type="project" value="UniProtKB-UniRule"/>
</dbReference>
<dbReference type="GO" id="GO:0006302">
    <property type="term" value="P:double-strand break repair"/>
    <property type="evidence" value="ECO:0007669"/>
    <property type="project" value="TreeGrafter"/>
</dbReference>
<dbReference type="Gene3D" id="2.40.50.140">
    <property type="entry name" value="Nucleic acid-binding proteins"/>
    <property type="match status" value="1"/>
</dbReference>
<dbReference type="Gene3D" id="1.20.1440.120">
    <property type="entry name" value="Recombination protein O, C-terminal domain"/>
    <property type="match status" value="1"/>
</dbReference>
<dbReference type="HAMAP" id="MF_00201">
    <property type="entry name" value="RecO"/>
    <property type="match status" value="1"/>
</dbReference>
<dbReference type="InterPro" id="IPR037278">
    <property type="entry name" value="ARFGAP/RecO"/>
</dbReference>
<dbReference type="InterPro" id="IPR022572">
    <property type="entry name" value="DNA_rep/recomb_RecO_N"/>
</dbReference>
<dbReference type="InterPro" id="IPR012340">
    <property type="entry name" value="NA-bd_OB-fold"/>
</dbReference>
<dbReference type="InterPro" id="IPR003717">
    <property type="entry name" value="RecO"/>
</dbReference>
<dbReference type="InterPro" id="IPR042242">
    <property type="entry name" value="RecO_C"/>
</dbReference>
<dbReference type="NCBIfam" id="TIGR00613">
    <property type="entry name" value="reco"/>
    <property type="match status" value="1"/>
</dbReference>
<dbReference type="PANTHER" id="PTHR33991">
    <property type="entry name" value="DNA REPAIR PROTEIN RECO"/>
    <property type="match status" value="1"/>
</dbReference>
<dbReference type="PANTHER" id="PTHR33991:SF1">
    <property type="entry name" value="DNA REPAIR PROTEIN RECO"/>
    <property type="match status" value="1"/>
</dbReference>
<dbReference type="Pfam" id="PF02565">
    <property type="entry name" value="RecO_C"/>
    <property type="match status" value="1"/>
</dbReference>
<dbReference type="Pfam" id="PF11967">
    <property type="entry name" value="RecO_N"/>
    <property type="match status" value="1"/>
</dbReference>
<dbReference type="SUPFAM" id="SSF57863">
    <property type="entry name" value="ArfGap/RecO-like zinc finger"/>
    <property type="match status" value="1"/>
</dbReference>
<dbReference type="SUPFAM" id="SSF50249">
    <property type="entry name" value="Nucleic acid-binding proteins"/>
    <property type="match status" value="1"/>
</dbReference>
<organism>
    <name type="scientific">Streptococcus pyogenes serotype M3 (strain SSI-1)</name>
    <dbReference type="NCBI Taxonomy" id="193567"/>
    <lineage>
        <taxon>Bacteria</taxon>
        <taxon>Bacillati</taxon>
        <taxon>Bacillota</taxon>
        <taxon>Bacilli</taxon>
        <taxon>Lactobacillales</taxon>
        <taxon>Streptococcaceae</taxon>
        <taxon>Streptococcus</taxon>
    </lineage>
</organism>
<name>RECO_STRPQ</name>
<protein>
    <recommendedName>
        <fullName>DNA repair protein RecO</fullName>
    </recommendedName>
    <alternativeName>
        <fullName>Recombination protein O</fullName>
    </alternativeName>
</protein>
<evidence type="ECO:0000250" key="1"/>
<evidence type="ECO:0000305" key="2"/>
<reference key="1">
    <citation type="journal article" date="2003" name="Genome Res.">
        <title>Genome sequence of an M3 strain of Streptococcus pyogenes reveals a large-scale genomic rearrangement in invasive strains and new insights into phage evolution.</title>
        <authorList>
            <person name="Nakagawa I."/>
            <person name="Kurokawa K."/>
            <person name="Yamashita A."/>
            <person name="Nakata M."/>
            <person name="Tomiyasu Y."/>
            <person name="Okahashi N."/>
            <person name="Kawabata S."/>
            <person name="Yamazaki K."/>
            <person name="Shiba T."/>
            <person name="Yasunaga T."/>
            <person name="Hayashi H."/>
            <person name="Hattori M."/>
            <person name="Hamada S."/>
        </authorList>
    </citation>
    <scope>NUCLEOTIDE SEQUENCE [LARGE SCALE GENOMIC DNA]</scope>
    <source>
        <strain>SSI-1</strain>
    </source>
</reference>
<comment type="function">
    <text evidence="1">Involved in DNA repair and RecF pathway recombination.</text>
</comment>
<comment type="similarity">
    <text evidence="2">Belongs to the RecO family.</text>
</comment>
<gene>
    <name type="primary">recO</name>
    <name type="ordered locus">SPs0017</name>
</gene>